<proteinExistence type="inferred from homology"/>
<reference key="1">
    <citation type="journal article" date="2006" name="Environ. Microbiol.">
        <title>Whole genome analysis of the marine Bacteroidetes'Gramella forsetii' reveals adaptations to degradation of polymeric organic matter.</title>
        <authorList>
            <person name="Bauer M."/>
            <person name="Kube M."/>
            <person name="Teeling H."/>
            <person name="Richter M."/>
            <person name="Lombardot T."/>
            <person name="Allers E."/>
            <person name="Wuerdemann C.A."/>
            <person name="Quast C."/>
            <person name="Kuhl H."/>
            <person name="Knaust F."/>
            <person name="Woebken D."/>
            <person name="Bischof K."/>
            <person name="Mussmann M."/>
            <person name="Choudhuri J.V."/>
            <person name="Meyer F."/>
            <person name="Reinhardt R."/>
            <person name="Amann R.I."/>
            <person name="Gloeckner F.O."/>
        </authorList>
    </citation>
    <scope>NUCLEOTIDE SEQUENCE [LARGE SCALE GENOMIC DNA]</scope>
    <source>
        <strain>DSM 17595 / CGMCC 1.15422 / KT0803</strain>
    </source>
</reference>
<evidence type="ECO:0000250" key="1"/>
<evidence type="ECO:0000255" key="2">
    <source>
        <dbReference type="HAMAP-Rule" id="MF_00118"/>
    </source>
</evidence>
<keyword id="KW-0963">Cytoplasm</keyword>
<keyword id="KW-0251">Elongation factor</keyword>
<keyword id="KW-0342">GTP-binding</keyword>
<keyword id="KW-0378">Hydrolase</keyword>
<keyword id="KW-0460">Magnesium</keyword>
<keyword id="KW-0479">Metal-binding</keyword>
<keyword id="KW-0547">Nucleotide-binding</keyword>
<keyword id="KW-0648">Protein biosynthesis</keyword>
<comment type="function">
    <text evidence="2">GTP hydrolase that promotes the GTP-dependent binding of aminoacyl-tRNA to the A-site of ribosomes during protein biosynthesis.</text>
</comment>
<comment type="catalytic activity">
    <reaction evidence="2">
        <text>GTP + H2O = GDP + phosphate + H(+)</text>
        <dbReference type="Rhea" id="RHEA:19669"/>
        <dbReference type="ChEBI" id="CHEBI:15377"/>
        <dbReference type="ChEBI" id="CHEBI:15378"/>
        <dbReference type="ChEBI" id="CHEBI:37565"/>
        <dbReference type="ChEBI" id="CHEBI:43474"/>
        <dbReference type="ChEBI" id="CHEBI:58189"/>
        <dbReference type="EC" id="3.6.5.3"/>
    </reaction>
    <physiologicalReaction direction="left-to-right" evidence="2">
        <dbReference type="Rhea" id="RHEA:19670"/>
    </physiologicalReaction>
</comment>
<comment type="subunit">
    <text evidence="2">Monomer.</text>
</comment>
<comment type="subcellular location">
    <subcellularLocation>
        <location evidence="2">Cytoplasm</location>
    </subcellularLocation>
</comment>
<comment type="similarity">
    <text evidence="2">Belongs to the TRAFAC class translation factor GTPase superfamily. Classic translation factor GTPase family. EF-Tu/EF-1A subfamily.</text>
</comment>
<name>EFTU_CHRFK</name>
<accession>A0M3Z6</accession>
<gene>
    <name evidence="2" type="primary">tuf</name>
    <name type="ordered locus">GFO_2378</name>
</gene>
<protein>
    <recommendedName>
        <fullName evidence="2">Elongation factor Tu</fullName>
        <shortName evidence="2">EF-Tu</shortName>
        <ecNumber evidence="2">3.6.5.3</ecNumber>
    </recommendedName>
</protein>
<dbReference type="EC" id="3.6.5.3" evidence="2"/>
<dbReference type="EMBL" id="CU207366">
    <property type="protein sequence ID" value="CAL67341.1"/>
    <property type="molecule type" value="Genomic_DNA"/>
</dbReference>
<dbReference type="RefSeq" id="WP_011710244.1">
    <property type="nucleotide sequence ID" value="NC_008571.1"/>
</dbReference>
<dbReference type="SMR" id="A0M3Z6"/>
<dbReference type="STRING" id="411154.GFO_2378"/>
<dbReference type="KEGG" id="gfo:GFO_2378"/>
<dbReference type="eggNOG" id="COG0050">
    <property type="taxonomic scope" value="Bacteria"/>
</dbReference>
<dbReference type="HOGENOM" id="CLU_007265_0_0_10"/>
<dbReference type="OrthoDB" id="9804504at2"/>
<dbReference type="Proteomes" id="UP000000755">
    <property type="component" value="Chromosome"/>
</dbReference>
<dbReference type="GO" id="GO:0005829">
    <property type="term" value="C:cytosol"/>
    <property type="evidence" value="ECO:0007669"/>
    <property type="project" value="TreeGrafter"/>
</dbReference>
<dbReference type="GO" id="GO:0005525">
    <property type="term" value="F:GTP binding"/>
    <property type="evidence" value="ECO:0007669"/>
    <property type="project" value="UniProtKB-UniRule"/>
</dbReference>
<dbReference type="GO" id="GO:0003924">
    <property type="term" value="F:GTPase activity"/>
    <property type="evidence" value="ECO:0007669"/>
    <property type="project" value="InterPro"/>
</dbReference>
<dbReference type="GO" id="GO:0003746">
    <property type="term" value="F:translation elongation factor activity"/>
    <property type="evidence" value="ECO:0007669"/>
    <property type="project" value="UniProtKB-UniRule"/>
</dbReference>
<dbReference type="CDD" id="cd01884">
    <property type="entry name" value="EF_Tu"/>
    <property type="match status" value="1"/>
</dbReference>
<dbReference type="CDD" id="cd03697">
    <property type="entry name" value="EFTU_II"/>
    <property type="match status" value="1"/>
</dbReference>
<dbReference type="CDD" id="cd03707">
    <property type="entry name" value="EFTU_III"/>
    <property type="match status" value="1"/>
</dbReference>
<dbReference type="FunFam" id="2.40.30.10:FF:000001">
    <property type="entry name" value="Elongation factor Tu"/>
    <property type="match status" value="1"/>
</dbReference>
<dbReference type="FunFam" id="3.40.50.300:FF:000003">
    <property type="entry name" value="Elongation factor Tu"/>
    <property type="match status" value="1"/>
</dbReference>
<dbReference type="Gene3D" id="3.40.50.300">
    <property type="entry name" value="P-loop containing nucleotide triphosphate hydrolases"/>
    <property type="match status" value="1"/>
</dbReference>
<dbReference type="Gene3D" id="2.40.30.10">
    <property type="entry name" value="Translation factors"/>
    <property type="match status" value="2"/>
</dbReference>
<dbReference type="HAMAP" id="MF_00118_B">
    <property type="entry name" value="EF_Tu_B"/>
    <property type="match status" value="1"/>
</dbReference>
<dbReference type="InterPro" id="IPR041709">
    <property type="entry name" value="EF-Tu_GTP-bd"/>
</dbReference>
<dbReference type="InterPro" id="IPR050055">
    <property type="entry name" value="EF-Tu_GTPase"/>
</dbReference>
<dbReference type="InterPro" id="IPR004161">
    <property type="entry name" value="EFTu-like_2"/>
</dbReference>
<dbReference type="InterPro" id="IPR033720">
    <property type="entry name" value="EFTU_2"/>
</dbReference>
<dbReference type="InterPro" id="IPR031157">
    <property type="entry name" value="G_TR_CS"/>
</dbReference>
<dbReference type="InterPro" id="IPR027417">
    <property type="entry name" value="P-loop_NTPase"/>
</dbReference>
<dbReference type="InterPro" id="IPR005225">
    <property type="entry name" value="Small_GTP-bd"/>
</dbReference>
<dbReference type="InterPro" id="IPR000795">
    <property type="entry name" value="T_Tr_GTP-bd_dom"/>
</dbReference>
<dbReference type="InterPro" id="IPR009000">
    <property type="entry name" value="Transl_B-barrel_sf"/>
</dbReference>
<dbReference type="InterPro" id="IPR009001">
    <property type="entry name" value="Transl_elong_EF1A/Init_IF2_C"/>
</dbReference>
<dbReference type="InterPro" id="IPR004541">
    <property type="entry name" value="Transl_elong_EFTu/EF1A_bac/org"/>
</dbReference>
<dbReference type="InterPro" id="IPR004160">
    <property type="entry name" value="Transl_elong_EFTu/EF1A_C"/>
</dbReference>
<dbReference type="NCBIfam" id="TIGR00485">
    <property type="entry name" value="EF-Tu"/>
    <property type="match status" value="1"/>
</dbReference>
<dbReference type="NCBIfam" id="NF000766">
    <property type="entry name" value="PRK00049.1"/>
    <property type="match status" value="1"/>
</dbReference>
<dbReference type="NCBIfam" id="NF009372">
    <property type="entry name" value="PRK12735.1"/>
    <property type="match status" value="1"/>
</dbReference>
<dbReference type="NCBIfam" id="NF009373">
    <property type="entry name" value="PRK12736.1"/>
    <property type="match status" value="1"/>
</dbReference>
<dbReference type="NCBIfam" id="TIGR00231">
    <property type="entry name" value="small_GTP"/>
    <property type="match status" value="1"/>
</dbReference>
<dbReference type="PANTHER" id="PTHR43721:SF22">
    <property type="entry name" value="ELONGATION FACTOR TU, MITOCHONDRIAL"/>
    <property type="match status" value="1"/>
</dbReference>
<dbReference type="PANTHER" id="PTHR43721">
    <property type="entry name" value="ELONGATION FACTOR TU-RELATED"/>
    <property type="match status" value="1"/>
</dbReference>
<dbReference type="Pfam" id="PF00009">
    <property type="entry name" value="GTP_EFTU"/>
    <property type="match status" value="1"/>
</dbReference>
<dbReference type="Pfam" id="PF03144">
    <property type="entry name" value="GTP_EFTU_D2"/>
    <property type="match status" value="1"/>
</dbReference>
<dbReference type="Pfam" id="PF03143">
    <property type="entry name" value="GTP_EFTU_D3"/>
    <property type="match status" value="1"/>
</dbReference>
<dbReference type="PRINTS" id="PR00315">
    <property type="entry name" value="ELONGATNFCT"/>
</dbReference>
<dbReference type="SUPFAM" id="SSF50465">
    <property type="entry name" value="EF-Tu/eEF-1alpha/eIF2-gamma C-terminal domain"/>
    <property type="match status" value="1"/>
</dbReference>
<dbReference type="SUPFAM" id="SSF52540">
    <property type="entry name" value="P-loop containing nucleoside triphosphate hydrolases"/>
    <property type="match status" value="1"/>
</dbReference>
<dbReference type="SUPFAM" id="SSF50447">
    <property type="entry name" value="Translation proteins"/>
    <property type="match status" value="1"/>
</dbReference>
<dbReference type="PROSITE" id="PS00301">
    <property type="entry name" value="G_TR_1"/>
    <property type="match status" value="1"/>
</dbReference>
<dbReference type="PROSITE" id="PS51722">
    <property type="entry name" value="G_TR_2"/>
    <property type="match status" value="1"/>
</dbReference>
<organism>
    <name type="scientific">Christiangramia forsetii (strain DSM 17595 / CGMCC 1.15422 / KT0803)</name>
    <name type="common">Gramella forsetii</name>
    <dbReference type="NCBI Taxonomy" id="411154"/>
    <lineage>
        <taxon>Bacteria</taxon>
        <taxon>Pseudomonadati</taxon>
        <taxon>Bacteroidota</taxon>
        <taxon>Flavobacteriia</taxon>
        <taxon>Flavobacteriales</taxon>
        <taxon>Flavobacteriaceae</taxon>
        <taxon>Christiangramia</taxon>
    </lineage>
</organism>
<sequence>MAKEKYDRSKPHLNIGTIGHVDHGKTTLTAAITKVMADAGYSEASAFDQIDNAPEEKERGITINSSHVEYSTEKRHYAHVDCPGHADYVKNMVTGAAQMDGAILVVAATDGPMPQTREHILLGRQVGIPRIVVFLNKVDLVDDEELLELVEMEVRDLLSFYEYDGDNGPVISGSALGALEGDEKWSKTVLELMEAVDTWIELPERDVDKAFLMPIEDVFSITGRGTVATGRIETGVANTGDPIEIIGMGAGKLTSTITGVEMFRKILDRGEAGDNVGILLRGIEKSQISRGMVITKPGSVTPHAKFKAEVYILKKEEGGRHTPFHNNYRPQFYVRTTDVTGTISLPDGVEMVMPGDNLTITVELIQAIAMNQGLRFAIREGGRTVGAGQVTEILD</sequence>
<feature type="chain" id="PRO_1000015670" description="Elongation factor Tu">
    <location>
        <begin position="1"/>
        <end position="395"/>
    </location>
</feature>
<feature type="domain" description="tr-type G">
    <location>
        <begin position="10"/>
        <end position="204"/>
    </location>
</feature>
<feature type="region of interest" description="G1" evidence="1">
    <location>
        <begin position="19"/>
        <end position="26"/>
    </location>
</feature>
<feature type="region of interest" description="G2" evidence="1">
    <location>
        <begin position="60"/>
        <end position="64"/>
    </location>
</feature>
<feature type="region of interest" description="G3" evidence="1">
    <location>
        <begin position="81"/>
        <end position="84"/>
    </location>
</feature>
<feature type="region of interest" description="G4" evidence="1">
    <location>
        <begin position="136"/>
        <end position="139"/>
    </location>
</feature>
<feature type="region of interest" description="G5" evidence="1">
    <location>
        <begin position="174"/>
        <end position="176"/>
    </location>
</feature>
<feature type="binding site" evidence="2">
    <location>
        <begin position="19"/>
        <end position="26"/>
    </location>
    <ligand>
        <name>GTP</name>
        <dbReference type="ChEBI" id="CHEBI:37565"/>
    </ligand>
</feature>
<feature type="binding site" evidence="2">
    <location>
        <position position="26"/>
    </location>
    <ligand>
        <name>Mg(2+)</name>
        <dbReference type="ChEBI" id="CHEBI:18420"/>
    </ligand>
</feature>
<feature type="binding site" evidence="2">
    <location>
        <begin position="81"/>
        <end position="85"/>
    </location>
    <ligand>
        <name>GTP</name>
        <dbReference type="ChEBI" id="CHEBI:37565"/>
    </ligand>
</feature>
<feature type="binding site" evidence="2">
    <location>
        <begin position="136"/>
        <end position="139"/>
    </location>
    <ligand>
        <name>GTP</name>
        <dbReference type="ChEBI" id="CHEBI:37565"/>
    </ligand>
</feature>